<feature type="chain" id="PRO_0000373505" description="Uncharacterized protein C129R">
    <location>
        <begin position="1"/>
        <end position="129"/>
    </location>
</feature>
<sequence>MEHPSTNYTPEQQHEKLKYYVLIPKHLWSYIKYGTHVRYYTTQNVFRVGGFVLQNPYEAVIKNEVKTAIRLQNSFNTKAKGHVTWAVPYDNISKLYAKPDAIMLTIQENVEKALHALNQNVLTLASKIR</sequence>
<organism>
    <name type="scientific">African swine fever virus (strain Badajoz 1971 Vero-adapted)</name>
    <name type="common">Ba71V</name>
    <name type="synonym">ASFV</name>
    <dbReference type="NCBI Taxonomy" id="10498"/>
    <lineage>
        <taxon>Viruses</taxon>
        <taxon>Varidnaviria</taxon>
        <taxon>Bamfordvirae</taxon>
        <taxon>Nucleocytoviricota</taxon>
        <taxon>Pokkesviricetes</taxon>
        <taxon>Asfuvirales</taxon>
        <taxon>Asfarviridae</taxon>
        <taxon>Asfivirus</taxon>
        <taxon>African swine fever virus</taxon>
    </lineage>
</organism>
<organismHost>
    <name type="scientific">Ornithodoros</name>
    <name type="common">relapsing fever ticks</name>
    <dbReference type="NCBI Taxonomy" id="6937"/>
</organismHost>
<organismHost>
    <name type="scientific">Sus scrofa</name>
    <name type="common">Pig</name>
    <dbReference type="NCBI Taxonomy" id="9823"/>
</organismHost>
<evidence type="ECO:0000269" key="1">
    <source>
    </source>
</evidence>
<evidence type="ECO:0000269" key="2">
    <source>
    </source>
</evidence>
<evidence type="ECO:0000305" key="3"/>
<gene>
    <name type="ordered locus">Ba71V-062</name>
    <name type="ORF">C129R</name>
</gene>
<accession>Q65154</accession>
<keyword id="KW-0945">Host-virus interaction</keyword>
<keyword id="KW-0378">Hydrolase</keyword>
<keyword id="KW-1090">Inhibition of host innate immune response by virus</keyword>
<keyword id="KW-1114">Inhibition of host interferon signaling pathway by virus</keyword>
<keyword id="KW-0922">Interferon antiviral system evasion</keyword>
<keyword id="KW-1185">Reference proteome</keyword>
<keyword id="KW-0899">Viral immunoevasion</keyword>
<keyword id="KW-0946">Virion</keyword>
<name>VF129_ASFB7</name>
<dbReference type="EC" id="3.1.4.-" evidence="2"/>
<dbReference type="EMBL" id="U18466">
    <property type="protein sequence ID" value="AAA65292.1"/>
    <property type="molecule type" value="Genomic_DNA"/>
</dbReference>
<dbReference type="RefSeq" id="NP_042756.1">
    <property type="nucleotide sequence ID" value="NC_001659.2"/>
</dbReference>
<dbReference type="GeneID" id="22220292"/>
<dbReference type="KEGG" id="vg:22220292"/>
<dbReference type="Proteomes" id="UP000000624">
    <property type="component" value="Segment"/>
</dbReference>
<dbReference type="GO" id="GO:0044423">
    <property type="term" value="C:virion component"/>
    <property type="evidence" value="ECO:0007669"/>
    <property type="project" value="UniProtKB-KW"/>
</dbReference>
<dbReference type="GO" id="GO:0016787">
    <property type="term" value="F:hydrolase activity"/>
    <property type="evidence" value="ECO:0007669"/>
    <property type="project" value="UniProtKB-KW"/>
</dbReference>
<dbReference type="GO" id="GO:0052170">
    <property type="term" value="P:symbiont-mediated suppression of host innate immune response"/>
    <property type="evidence" value="ECO:0007669"/>
    <property type="project" value="UniProtKB-KW"/>
</dbReference>
<dbReference type="GO" id="GO:0039502">
    <property type="term" value="P:symbiont-mediated suppression of host type I interferon-mediated signaling pathway"/>
    <property type="evidence" value="ECO:0007669"/>
    <property type="project" value="UniProtKB-KW"/>
</dbReference>
<proteinExistence type="evidence at protein level"/>
<reference key="1">
    <citation type="journal article" date="1995" name="Virology">
        <title>Analysis of the complete nucleotide sequence of African swine fever virus.</title>
        <authorList>
            <person name="Yanez R.J."/>
            <person name="Rodriguez J.M."/>
            <person name="Nogal M.L."/>
            <person name="Yuste L."/>
            <person name="Enriquez C."/>
            <person name="Rodriguez J.F."/>
            <person name="Vinuela E."/>
        </authorList>
    </citation>
    <scope>NUCLEOTIDE SEQUENCE [LARGE SCALE GENOMIC DNA]</scope>
</reference>
<reference key="2">
    <citation type="journal article" date="2018" name="J. Virol.">
        <title>A Proteomic Atlas of the African Swine Fever Virus Particle.</title>
        <authorList>
            <person name="Alejo A."/>
            <person name="Matamoros T."/>
            <person name="Guerra M."/>
            <person name="Andres G."/>
        </authorList>
    </citation>
    <scope>SUBCELLULAR LOCATION</scope>
</reference>
<reference key="3">
    <citation type="journal article" date="2022" name="J. Virol.">
        <title>African Swine Fever Virus EP364R and C129R Target Cyclic GMP-AMP To Inhibit the cGAS-STING Signaling Pathway.</title>
        <authorList>
            <person name="Dodantenna N."/>
            <person name="Ranathunga L."/>
            <person name="Chathuranga W.A.G."/>
            <person name="Weerawardhana A."/>
            <person name="Cha J.W."/>
            <person name="Subasinghe A."/>
            <person name="Gamage N."/>
            <person name="Haluwana D.K."/>
            <person name="Kim Y."/>
            <person name="Jheong W."/>
            <person name="Poo H."/>
            <person name="Lee J.S."/>
        </authorList>
    </citation>
    <scope>FUNCTION</scope>
    <scope>CATALYTIC ACTIVITY</scope>
</reference>
<comment type="function">
    <text evidence="2">Plays a role in the inhibition of type I interferon signaling pathway. Mechanistically, specifically interacts with 2',3'-cGAMP and cleaves it via its phosphodiesterase activity. In turn, prevents 2',3'-cGAMP interaction with host ER-resident STING1 leading to inhibition of downstream signaling pathway and type I interferon production.</text>
</comment>
<comment type="subcellular location">
    <subcellularLocation>
        <location evidence="1">Virion</location>
    </subcellularLocation>
</comment>
<comment type="similarity">
    <text evidence="3">Belongs to the asfivirus C129R family.</text>
</comment>
<protein>
    <recommendedName>
        <fullName>Uncharacterized protein C129R</fullName>
        <shortName>pC129R</shortName>
        <ecNumber evidence="2">3.1.4.-</ecNumber>
    </recommendedName>
</protein>